<reference key="1">
    <citation type="journal article" date="2007" name="Nature">
        <title>Evolution of genes and genomes on the Drosophila phylogeny.</title>
        <authorList>
            <consortium name="Drosophila 12 genomes consortium"/>
        </authorList>
    </citation>
    <scope>NUCLEOTIDE SEQUENCE [LARGE SCALE GENOMIC DNA]</scope>
    <source>
        <strain>Tucson 14021-0224.01</strain>
    </source>
</reference>
<gene>
    <name type="ORF">GG12136</name>
</gene>
<name>LST2_DROER</name>
<protein>
    <recommendedName>
        <fullName>Lateral signaling target protein 2 homolog</fullName>
    </recommendedName>
</protein>
<feature type="chain" id="PRO_0000378963" description="Lateral signaling target protein 2 homolog">
    <location>
        <begin position="1"/>
        <end position="981"/>
    </location>
</feature>
<feature type="zinc finger region" description="FYVE-type" evidence="2">
    <location>
        <begin position="901"/>
        <end position="961"/>
    </location>
</feature>
<feature type="region of interest" description="Disordered" evidence="3">
    <location>
        <begin position="308"/>
        <end position="462"/>
    </location>
</feature>
<feature type="region of interest" description="Disordered" evidence="3">
    <location>
        <begin position="561"/>
        <end position="642"/>
    </location>
</feature>
<feature type="region of interest" description="Disordered" evidence="3">
    <location>
        <begin position="749"/>
        <end position="897"/>
    </location>
</feature>
<feature type="compositionally biased region" description="Low complexity" evidence="3">
    <location>
        <begin position="326"/>
        <end position="356"/>
    </location>
</feature>
<feature type="compositionally biased region" description="Low complexity" evidence="3">
    <location>
        <begin position="369"/>
        <end position="380"/>
    </location>
</feature>
<feature type="compositionally biased region" description="Low complexity" evidence="3">
    <location>
        <begin position="390"/>
        <end position="404"/>
    </location>
</feature>
<feature type="compositionally biased region" description="Low complexity" evidence="3">
    <location>
        <begin position="412"/>
        <end position="433"/>
    </location>
</feature>
<feature type="compositionally biased region" description="Acidic residues" evidence="3">
    <location>
        <begin position="434"/>
        <end position="462"/>
    </location>
</feature>
<feature type="compositionally biased region" description="Basic residues" evidence="3">
    <location>
        <begin position="576"/>
        <end position="611"/>
    </location>
</feature>
<feature type="compositionally biased region" description="Low complexity" evidence="3">
    <location>
        <begin position="630"/>
        <end position="642"/>
    </location>
</feature>
<feature type="compositionally biased region" description="Polar residues" evidence="3">
    <location>
        <begin position="760"/>
        <end position="791"/>
    </location>
</feature>
<feature type="compositionally biased region" description="Low complexity" evidence="3">
    <location>
        <begin position="811"/>
        <end position="866"/>
    </location>
</feature>
<feature type="compositionally biased region" description="Low complexity" evidence="3">
    <location>
        <begin position="883"/>
        <end position="896"/>
    </location>
</feature>
<feature type="binding site" evidence="2">
    <location>
        <position position="907"/>
    </location>
    <ligand>
        <name>Zn(2+)</name>
        <dbReference type="ChEBI" id="CHEBI:29105"/>
        <label>1</label>
    </ligand>
</feature>
<feature type="binding site" evidence="2">
    <location>
        <position position="910"/>
    </location>
    <ligand>
        <name>Zn(2+)</name>
        <dbReference type="ChEBI" id="CHEBI:29105"/>
        <label>1</label>
    </ligand>
</feature>
<feature type="binding site" evidence="2">
    <location>
        <position position="923"/>
    </location>
    <ligand>
        <name>Zn(2+)</name>
        <dbReference type="ChEBI" id="CHEBI:29105"/>
        <label>2</label>
    </ligand>
</feature>
<feature type="binding site" evidence="2">
    <location>
        <position position="926"/>
    </location>
    <ligand>
        <name>Zn(2+)</name>
        <dbReference type="ChEBI" id="CHEBI:29105"/>
        <label>2</label>
    </ligand>
</feature>
<feature type="binding site" evidence="2">
    <location>
        <position position="931"/>
    </location>
    <ligand>
        <name>Zn(2+)</name>
        <dbReference type="ChEBI" id="CHEBI:29105"/>
        <label>1</label>
    </ligand>
</feature>
<feature type="binding site" evidence="2">
    <location>
        <position position="934"/>
    </location>
    <ligand>
        <name>Zn(2+)</name>
        <dbReference type="ChEBI" id="CHEBI:29105"/>
        <label>1</label>
    </ligand>
</feature>
<feature type="binding site" evidence="2">
    <location>
        <position position="953"/>
    </location>
    <ligand>
        <name>Zn(2+)</name>
        <dbReference type="ChEBI" id="CHEBI:29105"/>
        <label>2</label>
    </ligand>
</feature>
<feature type="binding site" evidence="2">
    <location>
        <position position="956"/>
    </location>
    <ligand>
        <name>Zn(2+)</name>
        <dbReference type="ChEBI" id="CHEBI:29105"/>
        <label>2</label>
    </ligand>
</feature>
<feature type="modified residue" description="Phosphoserine" evidence="1">
    <location>
        <position position="544"/>
    </location>
</feature>
<feature type="modified residue" description="Phosphoserine" evidence="1">
    <location>
        <position position="545"/>
    </location>
</feature>
<feature type="modified residue" description="Phosphoserine" evidence="1">
    <location>
        <position position="805"/>
    </location>
</feature>
<sequence>MDTFKRWLNKPKADDKSLLARFFHADRSLTAVASELDSFDGRAEPDRCTRLVSRLRQNQDKVLAITNLIMEELLGEDRDPRAFRAKFPEEVLQENLAGQLWFGAECLAAGSSIMNRETESKEMRPLAQAVTKSLGNVRVLLRDQCLKNNVPNSKTLHLDLNDSTTEQLYESLKIFDRLFAEFELSYVSAMVQVKSRHEYEMQQWIGVLFSETLQRALKIGLLDQEMVDAFDPGLMFSIPRLAIVAGLVVYAKGPLNMDMPGDQLSEMFRPFRTILIKIRDLLRNLNNQELYQLEKLLCTNEDINTKVPLGSSSIEAPSPEHSAHPTTSSSQNNNNSSNNNHSSSSTTTTTMGTTNTHRTVERLVDQRNNNHNSNSNSSTNPTVEGATLRSPSMLSLSATSTPTASPAPSPTPSHSIDSTSSAATSSTNPPADWSDGDDEDEDDDDIEVDEEDLESSDDDTDEEQLLKDIVAADCASGYLIPNTNLGNLLQPQEVPLTDNFVASEDDEYGTAEQQGHQGLEEEEPSTSAAMLAATRTLQRLRLPSSDTEPLAEPTTIKATEEQMQQPNGRHQESHSHSHRHHQRHHHHHHHRHSHQHRQPHPHRTTRSGRKRCSLEVADPETIQPEREQNLASGDTSAASSLSDDVSLAMRNTTARLKFKSTENLLHRLFVCIAGVADQLQTNFASDLRQILRSVFLMNMSSAQEEIDIPEKTKESELFEFRASENDVIQESAGSNQSIYSAEEVNPELDNVFSAGGGNQATGQRHSAGASMQRNNTIDLASQSGEGSPSGATMSTSRSHVTRSRSLGDQEAASSATSSTAQLRQQEQQQQLQIQLQRQRNNSVGSNTPSSASSTSSSSEQNSPVSARSGSRRRLQSNNETQMPSSATSTSATLSPPAWIPDGKAPRCMACQTPFTAFRRRHHCRNCGGVFCGVCSNASAPLPKYGLTKAVRVCRDCYVREVRSGMGVQGVQRVQSVQASAS</sequence>
<dbReference type="EMBL" id="CH954182">
    <property type="protein sequence ID" value="EDV53455.1"/>
    <property type="molecule type" value="Genomic_DNA"/>
</dbReference>
<dbReference type="SMR" id="B3P851"/>
<dbReference type="EnsemblMetazoa" id="FBtr0132190">
    <property type="protein sequence ID" value="FBpp0130682"/>
    <property type="gene ID" value="FBgn0104428"/>
</dbReference>
<dbReference type="EnsemblMetazoa" id="XM_001981549.3">
    <property type="protein sequence ID" value="XP_001981585.1"/>
    <property type="gene ID" value="LOC6554807"/>
</dbReference>
<dbReference type="GeneID" id="6554807"/>
<dbReference type="KEGG" id="der:6554807"/>
<dbReference type="eggNOG" id="KOG1819">
    <property type="taxonomic scope" value="Eukaryota"/>
</dbReference>
<dbReference type="HOGENOM" id="CLU_007360_1_0_1"/>
<dbReference type="OMA" id="CYVREVQ"/>
<dbReference type="OrthoDB" id="20035at2759"/>
<dbReference type="PhylomeDB" id="B3P851"/>
<dbReference type="Proteomes" id="UP000008711">
    <property type="component" value="Unassembled WGS sequence"/>
</dbReference>
<dbReference type="GO" id="GO:0031901">
    <property type="term" value="C:early endosome membrane"/>
    <property type="evidence" value="ECO:0007669"/>
    <property type="project" value="TreeGrafter"/>
</dbReference>
<dbReference type="GO" id="GO:0008270">
    <property type="term" value="F:zinc ion binding"/>
    <property type="evidence" value="ECO:0007669"/>
    <property type="project" value="UniProtKB-KW"/>
</dbReference>
<dbReference type="CDD" id="cd15731">
    <property type="entry name" value="FYVE_LST2"/>
    <property type="match status" value="1"/>
</dbReference>
<dbReference type="FunFam" id="3.30.40.10:FF:000073">
    <property type="entry name" value="myotubularin-related protein 4 isoform X2"/>
    <property type="match status" value="1"/>
</dbReference>
<dbReference type="Gene3D" id="3.30.40.10">
    <property type="entry name" value="Zinc/RING finger domain, C3HC4 (zinc finger)"/>
    <property type="match status" value="1"/>
</dbReference>
<dbReference type="InterPro" id="IPR043269">
    <property type="entry name" value="FYVE_LST2"/>
</dbReference>
<dbReference type="InterPro" id="IPR051118">
    <property type="entry name" value="LST-2"/>
</dbReference>
<dbReference type="InterPro" id="IPR000306">
    <property type="entry name" value="Znf_FYVE"/>
</dbReference>
<dbReference type="InterPro" id="IPR017455">
    <property type="entry name" value="Znf_FYVE-rel"/>
</dbReference>
<dbReference type="InterPro" id="IPR011011">
    <property type="entry name" value="Znf_FYVE_PHD"/>
</dbReference>
<dbReference type="InterPro" id="IPR013083">
    <property type="entry name" value="Znf_RING/FYVE/PHD"/>
</dbReference>
<dbReference type="PANTHER" id="PTHR46465">
    <property type="entry name" value="LATERAL SIGNALING TARGET PROTEIN 2 HOMOLOG"/>
    <property type="match status" value="1"/>
</dbReference>
<dbReference type="PANTHER" id="PTHR46465:SF2">
    <property type="entry name" value="LATERAL SIGNALING TARGET PROTEIN 2 HOMOLOG"/>
    <property type="match status" value="1"/>
</dbReference>
<dbReference type="Pfam" id="PF01363">
    <property type="entry name" value="FYVE"/>
    <property type="match status" value="1"/>
</dbReference>
<dbReference type="SMART" id="SM00064">
    <property type="entry name" value="FYVE"/>
    <property type="match status" value="1"/>
</dbReference>
<dbReference type="SUPFAM" id="SSF57903">
    <property type="entry name" value="FYVE/PHD zinc finger"/>
    <property type="match status" value="1"/>
</dbReference>
<dbReference type="PROSITE" id="PS50178">
    <property type="entry name" value="ZF_FYVE"/>
    <property type="match status" value="1"/>
</dbReference>
<comment type="function">
    <text evidence="1">Negative regulator of epidermal growth factor receptor (EGFR) signaling.</text>
</comment>
<comment type="similarity">
    <text evidence="4">Belongs to the lst-2 family.</text>
</comment>
<keyword id="KW-0479">Metal-binding</keyword>
<keyword id="KW-0597">Phosphoprotein</keyword>
<keyword id="KW-0862">Zinc</keyword>
<keyword id="KW-0863">Zinc-finger</keyword>
<proteinExistence type="inferred from homology"/>
<accession>B3P851</accession>
<evidence type="ECO:0000250" key="1"/>
<evidence type="ECO:0000255" key="2">
    <source>
        <dbReference type="PROSITE-ProRule" id="PRU00091"/>
    </source>
</evidence>
<evidence type="ECO:0000256" key="3">
    <source>
        <dbReference type="SAM" id="MobiDB-lite"/>
    </source>
</evidence>
<evidence type="ECO:0000305" key="4"/>
<organism>
    <name type="scientific">Drosophila erecta</name>
    <name type="common">Fruit fly</name>
    <dbReference type="NCBI Taxonomy" id="7220"/>
    <lineage>
        <taxon>Eukaryota</taxon>
        <taxon>Metazoa</taxon>
        <taxon>Ecdysozoa</taxon>
        <taxon>Arthropoda</taxon>
        <taxon>Hexapoda</taxon>
        <taxon>Insecta</taxon>
        <taxon>Pterygota</taxon>
        <taxon>Neoptera</taxon>
        <taxon>Endopterygota</taxon>
        <taxon>Diptera</taxon>
        <taxon>Brachycera</taxon>
        <taxon>Muscomorpha</taxon>
        <taxon>Ephydroidea</taxon>
        <taxon>Drosophilidae</taxon>
        <taxon>Drosophila</taxon>
        <taxon>Sophophora</taxon>
    </lineage>
</organism>